<name>RL13_NEIMB</name>
<dbReference type="EMBL" id="AE002098">
    <property type="protein sequence ID" value="AAF42377.1"/>
    <property type="molecule type" value="Genomic_DNA"/>
</dbReference>
<dbReference type="RefSeq" id="NP_275047.1">
    <property type="nucleotide sequence ID" value="NC_003112.2"/>
</dbReference>
<dbReference type="RefSeq" id="WP_002215010.1">
    <property type="nucleotide sequence ID" value="NC_003112.2"/>
</dbReference>
<dbReference type="SMR" id="Q7DD49"/>
<dbReference type="FunCoup" id="Q7DD49">
    <property type="interactions" value="616"/>
</dbReference>
<dbReference type="STRING" id="122586.NMB2057"/>
<dbReference type="PaxDb" id="122586-NMB2057"/>
<dbReference type="GeneID" id="93386984"/>
<dbReference type="KEGG" id="nme:NMB2057"/>
<dbReference type="PATRIC" id="fig|122586.8.peg.2635"/>
<dbReference type="HOGENOM" id="CLU_082184_2_2_4"/>
<dbReference type="InParanoid" id="Q7DD49"/>
<dbReference type="OrthoDB" id="9801330at2"/>
<dbReference type="Proteomes" id="UP000000425">
    <property type="component" value="Chromosome"/>
</dbReference>
<dbReference type="GO" id="GO:0022625">
    <property type="term" value="C:cytosolic large ribosomal subunit"/>
    <property type="evidence" value="ECO:0000318"/>
    <property type="project" value="GO_Central"/>
</dbReference>
<dbReference type="GO" id="GO:0005840">
    <property type="term" value="C:ribosome"/>
    <property type="evidence" value="ECO:0000318"/>
    <property type="project" value="GO_Central"/>
</dbReference>
<dbReference type="GO" id="GO:0003729">
    <property type="term" value="F:mRNA binding"/>
    <property type="evidence" value="ECO:0000318"/>
    <property type="project" value="GO_Central"/>
</dbReference>
<dbReference type="GO" id="GO:0003735">
    <property type="term" value="F:structural constituent of ribosome"/>
    <property type="evidence" value="ECO:0000318"/>
    <property type="project" value="GO_Central"/>
</dbReference>
<dbReference type="GO" id="GO:0017148">
    <property type="term" value="P:negative regulation of translation"/>
    <property type="evidence" value="ECO:0000318"/>
    <property type="project" value="GO_Central"/>
</dbReference>
<dbReference type="GO" id="GO:0006412">
    <property type="term" value="P:translation"/>
    <property type="evidence" value="ECO:0007669"/>
    <property type="project" value="UniProtKB-UniRule"/>
</dbReference>
<dbReference type="CDD" id="cd00392">
    <property type="entry name" value="Ribosomal_L13"/>
    <property type="match status" value="1"/>
</dbReference>
<dbReference type="FunFam" id="3.90.1180.10:FF:000001">
    <property type="entry name" value="50S ribosomal protein L13"/>
    <property type="match status" value="1"/>
</dbReference>
<dbReference type="Gene3D" id="3.90.1180.10">
    <property type="entry name" value="Ribosomal protein L13"/>
    <property type="match status" value="1"/>
</dbReference>
<dbReference type="HAMAP" id="MF_01366">
    <property type="entry name" value="Ribosomal_uL13"/>
    <property type="match status" value="1"/>
</dbReference>
<dbReference type="InterPro" id="IPR005822">
    <property type="entry name" value="Ribosomal_uL13"/>
</dbReference>
<dbReference type="InterPro" id="IPR005823">
    <property type="entry name" value="Ribosomal_uL13_bac-type"/>
</dbReference>
<dbReference type="InterPro" id="IPR036899">
    <property type="entry name" value="Ribosomal_uL13_sf"/>
</dbReference>
<dbReference type="NCBIfam" id="TIGR01066">
    <property type="entry name" value="rplM_bact"/>
    <property type="match status" value="1"/>
</dbReference>
<dbReference type="PANTHER" id="PTHR11545:SF2">
    <property type="entry name" value="LARGE RIBOSOMAL SUBUNIT PROTEIN UL13M"/>
    <property type="match status" value="1"/>
</dbReference>
<dbReference type="PANTHER" id="PTHR11545">
    <property type="entry name" value="RIBOSOMAL PROTEIN L13"/>
    <property type="match status" value="1"/>
</dbReference>
<dbReference type="Pfam" id="PF00572">
    <property type="entry name" value="Ribosomal_L13"/>
    <property type="match status" value="1"/>
</dbReference>
<dbReference type="PIRSF" id="PIRSF002181">
    <property type="entry name" value="Ribosomal_L13"/>
    <property type="match status" value="1"/>
</dbReference>
<dbReference type="SUPFAM" id="SSF52161">
    <property type="entry name" value="Ribosomal protein L13"/>
    <property type="match status" value="1"/>
</dbReference>
<gene>
    <name evidence="1" type="primary">rplM</name>
    <name type="ordered locus">NMB2057</name>
</gene>
<reference key="1">
    <citation type="journal article" date="2000" name="Science">
        <title>Complete genome sequence of Neisseria meningitidis serogroup B strain MC58.</title>
        <authorList>
            <person name="Tettelin H."/>
            <person name="Saunders N.J."/>
            <person name="Heidelberg J.F."/>
            <person name="Jeffries A.C."/>
            <person name="Nelson K.E."/>
            <person name="Eisen J.A."/>
            <person name="Ketchum K.A."/>
            <person name="Hood D.W."/>
            <person name="Peden J.F."/>
            <person name="Dodson R.J."/>
            <person name="Nelson W.C."/>
            <person name="Gwinn M.L."/>
            <person name="DeBoy R.T."/>
            <person name="Peterson J.D."/>
            <person name="Hickey E.K."/>
            <person name="Haft D.H."/>
            <person name="Salzberg S.L."/>
            <person name="White O."/>
            <person name="Fleischmann R.D."/>
            <person name="Dougherty B.A."/>
            <person name="Mason T.M."/>
            <person name="Ciecko A."/>
            <person name="Parksey D.S."/>
            <person name="Blair E."/>
            <person name="Cittone H."/>
            <person name="Clark E.B."/>
            <person name="Cotton M.D."/>
            <person name="Utterback T.R."/>
            <person name="Khouri H.M."/>
            <person name="Qin H."/>
            <person name="Vamathevan J.J."/>
            <person name="Gill J."/>
            <person name="Scarlato V."/>
            <person name="Masignani V."/>
            <person name="Pizza M."/>
            <person name="Grandi G."/>
            <person name="Sun L."/>
            <person name="Smith H.O."/>
            <person name="Fraser C.M."/>
            <person name="Moxon E.R."/>
            <person name="Rappuoli R."/>
            <person name="Venter J.C."/>
        </authorList>
    </citation>
    <scope>NUCLEOTIDE SEQUENCE [LARGE SCALE GENOMIC DNA]</scope>
    <source>
        <strain>ATCC BAA-335 / MC58</strain>
    </source>
</reference>
<accession>Q7DD49</accession>
<feature type="chain" id="PRO_0000261755" description="Large ribosomal subunit protein uL13">
    <location>
        <begin position="1"/>
        <end position="143"/>
    </location>
</feature>
<proteinExistence type="inferred from homology"/>
<keyword id="KW-1185">Reference proteome</keyword>
<keyword id="KW-0687">Ribonucleoprotein</keyword>
<keyword id="KW-0689">Ribosomal protein</keyword>
<protein>
    <recommendedName>
        <fullName evidence="1">Large ribosomal subunit protein uL13</fullName>
    </recommendedName>
    <alternativeName>
        <fullName evidence="2">50S ribosomal protein L13</fullName>
    </alternativeName>
</protein>
<organism>
    <name type="scientific">Neisseria meningitidis serogroup B (strain ATCC BAA-335 / MC58)</name>
    <dbReference type="NCBI Taxonomy" id="122586"/>
    <lineage>
        <taxon>Bacteria</taxon>
        <taxon>Pseudomonadati</taxon>
        <taxon>Pseudomonadota</taxon>
        <taxon>Betaproteobacteria</taxon>
        <taxon>Neisseriales</taxon>
        <taxon>Neisseriaceae</taxon>
        <taxon>Neisseria</taxon>
    </lineage>
</organism>
<evidence type="ECO:0000255" key="1">
    <source>
        <dbReference type="HAMAP-Rule" id="MF_01366"/>
    </source>
</evidence>
<evidence type="ECO:0000305" key="2"/>
<sequence>MKTFSAKPHEVKREWFVIDAQDKVLGRVAAEVASRLRGKHKPEYTPHVDTGDYIIVINADKLRVTGAKFEDKKYFRHSGFPGGIYERTFREMQEQFPGRALEQAVKGMLPKGPLGYAMIKKLKVYAGAEHAHAAQQPKVLELK</sequence>
<comment type="function">
    <text evidence="1">This protein is one of the early assembly proteins of the 50S ribosomal subunit, although it is not seen to bind rRNA by itself. It is important during the early stages of 50S assembly.</text>
</comment>
<comment type="subunit">
    <text evidence="1">Part of the 50S ribosomal subunit.</text>
</comment>
<comment type="similarity">
    <text evidence="1">Belongs to the universal ribosomal protein uL13 family.</text>
</comment>